<accession>Q9Y818</accession>
<name>UBC15_SCHPO</name>
<evidence type="ECO:0000255" key="1">
    <source>
        <dbReference type="PROSITE-ProRule" id="PRU00388"/>
    </source>
</evidence>
<evidence type="ECO:0000255" key="2">
    <source>
        <dbReference type="PROSITE-ProRule" id="PRU10133"/>
    </source>
</evidence>
<evidence type="ECO:0000269" key="3">
    <source>
    </source>
</evidence>
<evidence type="ECO:0007829" key="4">
    <source>
        <dbReference type="PDB" id="5KNL"/>
    </source>
</evidence>
<gene>
    <name type="primary">ubc15</name>
    <name type="ORF">SPBC1105.09</name>
</gene>
<sequence length="167" mass="19106">MPSSASEQLLRKQLKEIQKNPPQGFSVGLVDDKSIFEWEVMIIGPEDTLYEGGFFHATLSFPQDYPLMPPKMKFTTEIWHPNVHPNGEVCISILHPPGDDKYGYEDAGERWLPVHSPETILISVISMLSSPNDESPANIDAAKEFRENPQEFKKRVRRLVRRSIEMI</sequence>
<feature type="chain" id="PRO_0000082589" description="Ubiquitin-conjugating enzyme E2 15">
    <location>
        <begin position="1"/>
        <end position="167"/>
    </location>
</feature>
<feature type="domain" description="UBC core" evidence="1">
    <location>
        <begin position="5"/>
        <end position="165"/>
    </location>
</feature>
<feature type="active site" description="Glycyl thioester intermediate" evidence="1 2">
    <location>
        <position position="90"/>
    </location>
</feature>
<feature type="helix" evidence="4">
    <location>
        <begin position="5"/>
        <end position="17"/>
    </location>
</feature>
<feature type="strand" evidence="4">
    <location>
        <begin position="25"/>
        <end position="31"/>
    </location>
</feature>
<feature type="strand" evidence="4">
    <location>
        <begin position="34"/>
        <end position="43"/>
    </location>
</feature>
<feature type="turn" evidence="4">
    <location>
        <begin position="49"/>
        <end position="52"/>
    </location>
</feature>
<feature type="strand" evidence="4">
    <location>
        <begin position="54"/>
        <end position="60"/>
    </location>
</feature>
<feature type="turn" evidence="4">
    <location>
        <begin position="63"/>
        <end position="66"/>
    </location>
</feature>
<feature type="strand" evidence="4">
    <location>
        <begin position="71"/>
        <end position="74"/>
    </location>
</feature>
<feature type="strand" evidence="4">
    <location>
        <begin position="87"/>
        <end position="89"/>
    </location>
</feature>
<feature type="helix" evidence="4">
    <location>
        <begin position="92"/>
        <end position="94"/>
    </location>
</feature>
<feature type="strand" evidence="4">
    <location>
        <begin position="101"/>
        <end position="105"/>
    </location>
</feature>
<feature type="helix" evidence="4">
    <location>
        <begin position="117"/>
        <end position="129"/>
    </location>
</feature>
<feature type="helix" evidence="4">
    <location>
        <begin position="139"/>
        <end position="147"/>
    </location>
</feature>
<feature type="helix" evidence="4">
    <location>
        <begin position="149"/>
        <end position="167"/>
    </location>
</feature>
<keyword id="KW-0002">3D-structure</keyword>
<keyword id="KW-0067">ATP-binding</keyword>
<keyword id="KW-0547">Nucleotide-binding</keyword>
<keyword id="KW-1185">Reference proteome</keyword>
<keyword id="KW-0808">Transferase</keyword>
<keyword id="KW-0833">Ubl conjugation pathway</keyword>
<comment type="function">
    <text evidence="1 3">Catalyzes the covalent attachment of ubiquitin to other proteins. Has a role in the formation of chromatin structures that influence the localization of transcriptional silencing factors.</text>
</comment>
<comment type="catalytic activity">
    <reaction evidence="1 2">
        <text>S-ubiquitinyl-[E1 ubiquitin-activating enzyme]-L-cysteine + [E2 ubiquitin-conjugating enzyme]-L-cysteine = [E1 ubiquitin-activating enzyme]-L-cysteine + S-ubiquitinyl-[E2 ubiquitin-conjugating enzyme]-L-cysteine.</text>
        <dbReference type="EC" id="2.3.2.23"/>
    </reaction>
</comment>
<comment type="pathway">
    <text evidence="1">Protein modification; protein ubiquitination.</text>
</comment>
<comment type="similarity">
    <text evidence="1">Belongs to the ubiquitin-conjugating enzyme family.</text>
</comment>
<protein>
    <recommendedName>
        <fullName>Ubiquitin-conjugating enzyme E2 15</fullName>
        <ecNumber>2.3.2.23</ecNumber>
    </recommendedName>
    <alternativeName>
        <fullName>E2 ubiquitin-conjugating enzyme 15</fullName>
    </alternativeName>
    <alternativeName>
        <fullName>Ubiquitin carrier protein 15</fullName>
    </alternativeName>
    <alternativeName>
        <fullName>Ubiquitin-protein ligase 15</fullName>
    </alternativeName>
</protein>
<dbReference type="EC" id="2.3.2.23"/>
<dbReference type="EMBL" id="CU329671">
    <property type="protein sequence ID" value="CAB50972.1"/>
    <property type="molecule type" value="Genomic_DNA"/>
</dbReference>
<dbReference type="PIR" id="T39286">
    <property type="entry name" value="T39286"/>
</dbReference>
<dbReference type="RefSeq" id="NP_596465.1">
    <property type="nucleotide sequence ID" value="NM_001022384.2"/>
</dbReference>
<dbReference type="PDB" id="5KNL">
    <property type="method" value="X-ray"/>
    <property type="resolution" value="2.50 A"/>
    <property type="chains" value="C/F=1-167"/>
</dbReference>
<dbReference type="PDBsum" id="5KNL"/>
<dbReference type="SMR" id="Q9Y818"/>
<dbReference type="BioGRID" id="276539">
    <property type="interactions" value="32"/>
</dbReference>
<dbReference type="FunCoup" id="Q9Y818">
    <property type="interactions" value="264"/>
</dbReference>
<dbReference type="STRING" id="284812.Q9Y818"/>
<dbReference type="iPTMnet" id="Q9Y818"/>
<dbReference type="PaxDb" id="4896-SPBC1105.09.1"/>
<dbReference type="EnsemblFungi" id="SPBC1105.09.1">
    <property type="protein sequence ID" value="SPBC1105.09.1:pep"/>
    <property type="gene ID" value="SPBC1105.09"/>
</dbReference>
<dbReference type="GeneID" id="2539995"/>
<dbReference type="KEGG" id="spo:2539995"/>
<dbReference type="PomBase" id="SPBC1105.09">
    <property type="gene designation" value="ubc15"/>
</dbReference>
<dbReference type="VEuPathDB" id="FungiDB:SPBC1105.09"/>
<dbReference type="eggNOG" id="KOG0425">
    <property type="taxonomic scope" value="Eukaryota"/>
</dbReference>
<dbReference type="HOGENOM" id="CLU_030988_10_1_1"/>
<dbReference type="InParanoid" id="Q9Y818"/>
<dbReference type="OMA" id="MFEWEVM"/>
<dbReference type="PhylomeDB" id="Q9Y818"/>
<dbReference type="Reactome" id="R-SPO-8866652">
    <property type="pathway name" value="Synthesis of active ubiquitin: roles of E1 and E2 enzymes"/>
</dbReference>
<dbReference type="Reactome" id="R-SPO-983168">
    <property type="pathway name" value="Antigen processing: Ubiquitination &amp; Proteasome degradation"/>
</dbReference>
<dbReference type="UniPathway" id="UPA00143"/>
<dbReference type="PRO" id="PR:Q9Y818"/>
<dbReference type="Proteomes" id="UP000002485">
    <property type="component" value="Chromosome II"/>
</dbReference>
<dbReference type="GO" id="GO:0005634">
    <property type="term" value="C:nucleus"/>
    <property type="evidence" value="ECO:0000266"/>
    <property type="project" value="PomBase"/>
</dbReference>
<dbReference type="GO" id="GO:0005524">
    <property type="term" value="F:ATP binding"/>
    <property type="evidence" value="ECO:0007669"/>
    <property type="project" value="UniProtKB-KW"/>
</dbReference>
<dbReference type="GO" id="GO:0061631">
    <property type="term" value="F:ubiquitin conjugating enzyme activity"/>
    <property type="evidence" value="ECO:0000318"/>
    <property type="project" value="GO_Central"/>
</dbReference>
<dbReference type="GO" id="GO:0043161">
    <property type="term" value="P:proteasome-mediated ubiquitin-dependent protein catabolic process"/>
    <property type="evidence" value="ECO:0000318"/>
    <property type="project" value="GO_Central"/>
</dbReference>
<dbReference type="GO" id="GO:0000209">
    <property type="term" value="P:protein polyubiquitination"/>
    <property type="evidence" value="ECO:0000318"/>
    <property type="project" value="GO_Central"/>
</dbReference>
<dbReference type="CDD" id="cd23795">
    <property type="entry name" value="UBCc_UBE2G1"/>
    <property type="match status" value="1"/>
</dbReference>
<dbReference type="FunFam" id="3.10.110.10:FF:000025">
    <property type="entry name" value="ubiquitin-conjugating enzyme E2 7"/>
    <property type="match status" value="1"/>
</dbReference>
<dbReference type="Gene3D" id="3.10.110.10">
    <property type="entry name" value="Ubiquitin Conjugating Enzyme"/>
    <property type="match status" value="1"/>
</dbReference>
<dbReference type="InterPro" id="IPR050113">
    <property type="entry name" value="Ub_conjugating_enzyme"/>
</dbReference>
<dbReference type="InterPro" id="IPR000608">
    <property type="entry name" value="UBQ-conjugat_E2_core"/>
</dbReference>
<dbReference type="InterPro" id="IPR023313">
    <property type="entry name" value="UBQ-conjugating_AS"/>
</dbReference>
<dbReference type="InterPro" id="IPR016135">
    <property type="entry name" value="UBQ-conjugating_enzyme/RWD"/>
</dbReference>
<dbReference type="PANTHER" id="PTHR24067">
    <property type="entry name" value="UBIQUITIN-CONJUGATING ENZYME E2"/>
    <property type="match status" value="1"/>
</dbReference>
<dbReference type="Pfam" id="PF00179">
    <property type="entry name" value="UQ_con"/>
    <property type="match status" value="1"/>
</dbReference>
<dbReference type="SMART" id="SM00212">
    <property type="entry name" value="UBCc"/>
    <property type="match status" value="1"/>
</dbReference>
<dbReference type="SUPFAM" id="SSF54495">
    <property type="entry name" value="UBC-like"/>
    <property type="match status" value="1"/>
</dbReference>
<dbReference type="PROSITE" id="PS00183">
    <property type="entry name" value="UBC_1"/>
    <property type="match status" value="1"/>
</dbReference>
<dbReference type="PROSITE" id="PS50127">
    <property type="entry name" value="UBC_2"/>
    <property type="match status" value="1"/>
</dbReference>
<organism>
    <name type="scientific">Schizosaccharomyces pombe (strain 972 / ATCC 24843)</name>
    <name type="common">Fission yeast</name>
    <dbReference type="NCBI Taxonomy" id="284812"/>
    <lineage>
        <taxon>Eukaryota</taxon>
        <taxon>Fungi</taxon>
        <taxon>Dikarya</taxon>
        <taxon>Ascomycota</taxon>
        <taxon>Taphrinomycotina</taxon>
        <taxon>Schizosaccharomycetes</taxon>
        <taxon>Schizosaccharomycetales</taxon>
        <taxon>Schizosaccharomycetaceae</taxon>
        <taxon>Schizosaccharomyces</taxon>
    </lineage>
</organism>
<reference key="1">
    <citation type="journal article" date="2002" name="Nature">
        <title>The genome sequence of Schizosaccharomyces pombe.</title>
        <authorList>
            <person name="Wood V."/>
            <person name="Gwilliam R."/>
            <person name="Rajandream M.A."/>
            <person name="Lyne M.H."/>
            <person name="Lyne R."/>
            <person name="Stewart A."/>
            <person name="Sgouros J.G."/>
            <person name="Peat N."/>
            <person name="Hayles J."/>
            <person name="Baker S.G."/>
            <person name="Basham D."/>
            <person name="Bowman S."/>
            <person name="Brooks K."/>
            <person name="Brown D."/>
            <person name="Brown S."/>
            <person name="Chillingworth T."/>
            <person name="Churcher C.M."/>
            <person name="Collins M."/>
            <person name="Connor R."/>
            <person name="Cronin A."/>
            <person name="Davis P."/>
            <person name="Feltwell T."/>
            <person name="Fraser A."/>
            <person name="Gentles S."/>
            <person name="Goble A."/>
            <person name="Hamlin N."/>
            <person name="Harris D.E."/>
            <person name="Hidalgo J."/>
            <person name="Hodgson G."/>
            <person name="Holroyd S."/>
            <person name="Hornsby T."/>
            <person name="Howarth S."/>
            <person name="Huckle E.J."/>
            <person name="Hunt S."/>
            <person name="Jagels K."/>
            <person name="James K.D."/>
            <person name="Jones L."/>
            <person name="Jones M."/>
            <person name="Leather S."/>
            <person name="McDonald S."/>
            <person name="McLean J."/>
            <person name="Mooney P."/>
            <person name="Moule S."/>
            <person name="Mungall K.L."/>
            <person name="Murphy L.D."/>
            <person name="Niblett D."/>
            <person name="Odell C."/>
            <person name="Oliver K."/>
            <person name="O'Neil S."/>
            <person name="Pearson D."/>
            <person name="Quail M.A."/>
            <person name="Rabbinowitsch E."/>
            <person name="Rutherford K.M."/>
            <person name="Rutter S."/>
            <person name="Saunders D."/>
            <person name="Seeger K."/>
            <person name="Sharp S."/>
            <person name="Skelton J."/>
            <person name="Simmonds M.N."/>
            <person name="Squares R."/>
            <person name="Squares S."/>
            <person name="Stevens K."/>
            <person name="Taylor K."/>
            <person name="Taylor R.G."/>
            <person name="Tivey A."/>
            <person name="Walsh S.V."/>
            <person name="Warren T."/>
            <person name="Whitehead S."/>
            <person name="Woodward J.R."/>
            <person name="Volckaert G."/>
            <person name="Aert R."/>
            <person name="Robben J."/>
            <person name="Grymonprez B."/>
            <person name="Weltjens I."/>
            <person name="Vanstreels E."/>
            <person name="Rieger M."/>
            <person name="Schaefer M."/>
            <person name="Mueller-Auer S."/>
            <person name="Gabel C."/>
            <person name="Fuchs M."/>
            <person name="Duesterhoeft A."/>
            <person name="Fritzc C."/>
            <person name="Holzer E."/>
            <person name="Moestl D."/>
            <person name="Hilbert H."/>
            <person name="Borzym K."/>
            <person name="Langer I."/>
            <person name="Beck A."/>
            <person name="Lehrach H."/>
            <person name="Reinhardt R."/>
            <person name="Pohl T.M."/>
            <person name="Eger P."/>
            <person name="Zimmermann W."/>
            <person name="Wedler H."/>
            <person name="Wambutt R."/>
            <person name="Purnelle B."/>
            <person name="Goffeau A."/>
            <person name="Cadieu E."/>
            <person name="Dreano S."/>
            <person name="Gloux S."/>
            <person name="Lelaure V."/>
            <person name="Mottier S."/>
            <person name="Galibert F."/>
            <person name="Aves S.J."/>
            <person name="Xiang Z."/>
            <person name="Hunt C."/>
            <person name="Moore K."/>
            <person name="Hurst S.M."/>
            <person name="Lucas M."/>
            <person name="Rochet M."/>
            <person name="Gaillardin C."/>
            <person name="Tallada V.A."/>
            <person name="Garzon A."/>
            <person name="Thode G."/>
            <person name="Daga R.R."/>
            <person name="Cruzado L."/>
            <person name="Jimenez J."/>
            <person name="Sanchez M."/>
            <person name="del Rey F."/>
            <person name="Benito J."/>
            <person name="Dominguez A."/>
            <person name="Revuelta J.L."/>
            <person name="Moreno S."/>
            <person name="Armstrong J."/>
            <person name="Forsburg S.L."/>
            <person name="Cerutti L."/>
            <person name="Lowe T."/>
            <person name="McCombie W.R."/>
            <person name="Paulsen I."/>
            <person name="Potashkin J."/>
            <person name="Shpakovski G.V."/>
            <person name="Ussery D."/>
            <person name="Barrell B.G."/>
            <person name="Nurse P."/>
        </authorList>
    </citation>
    <scope>NUCLEOTIDE SEQUENCE [LARGE SCALE GENOMIC DNA]</scope>
    <source>
        <strain>972 / ATCC 24843</strain>
    </source>
</reference>
<reference key="2">
    <citation type="journal article" date="2002" name="Eukaryot. Cell">
        <title>The fission yeast ubiquitin-conjugating enzymes UbcP3, Ubc15, and Rhp6 affect transcriptional silencing of the mating-type region.</title>
        <authorList>
            <person name="Nielsen I.S."/>
            <person name="Nielsen O."/>
            <person name="Murray J.M."/>
            <person name="Thon G."/>
        </authorList>
    </citation>
    <scope>FUNCTION</scope>
</reference>
<proteinExistence type="evidence at protein level"/>